<feature type="chain" id="PRO_1000087659" description="Formate--tetrahydrofolate ligase">
    <location>
        <begin position="1"/>
        <end position="555"/>
    </location>
</feature>
<feature type="binding site" evidence="1">
    <location>
        <begin position="65"/>
        <end position="72"/>
    </location>
    <ligand>
        <name>ATP</name>
        <dbReference type="ChEBI" id="CHEBI:30616"/>
    </ligand>
</feature>
<keyword id="KW-0067">ATP-binding</keyword>
<keyword id="KW-0436">Ligase</keyword>
<keyword id="KW-0547">Nucleotide-binding</keyword>
<keyword id="KW-0554">One-carbon metabolism</keyword>
<protein>
    <recommendedName>
        <fullName evidence="1">Formate--tetrahydrofolate ligase</fullName>
        <ecNumber evidence="1">6.3.4.3</ecNumber>
    </recommendedName>
    <alternativeName>
        <fullName evidence="1">Formyltetrahydrofolate synthetase</fullName>
        <shortName evidence="1">FHS</shortName>
        <shortName evidence="1">FTHFS</shortName>
    </alternativeName>
</protein>
<dbReference type="EC" id="6.3.4.3" evidence="1"/>
<dbReference type="EMBL" id="CP000736">
    <property type="protein sequence ID" value="ABR52666.1"/>
    <property type="molecule type" value="Genomic_DNA"/>
</dbReference>
<dbReference type="SMR" id="A6U2J8"/>
<dbReference type="KEGG" id="sah:SaurJH1_1822"/>
<dbReference type="HOGENOM" id="CLU_003601_3_3_9"/>
<dbReference type="UniPathway" id="UPA00193"/>
<dbReference type="GO" id="GO:0005524">
    <property type="term" value="F:ATP binding"/>
    <property type="evidence" value="ECO:0007669"/>
    <property type="project" value="UniProtKB-UniRule"/>
</dbReference>
<dbReference type="GO" id="GO:0004329">
    <property type="term" value="F:formate-tetrahydrofolate ligase activity"/>
    <property type="evidence" value="ECO:0007669"/>
    <property type="project" value="UniProtKB-UniRule"/>
</dbReference>
<dbReference type="GO" id="GO:0035999">
    <property type="term" value="P:tetrahydrofolate interconversion"/>
    <property type="evidence" value="ECO:0007669"/>
    <property type="project" value="UniProtKB-UniRule"/>
</dbReference>
<dbReference type="CDD" id="cd00477">
    <property type="entry name" value="FTHFS"/>
    <property type="match status" value="1"/>
</dbReference>
<dbReference type="FunFam" id="3.30.1510.10:FF:000001">
    <property type="entry name" value="Formate--tetrahydrofolate ligase"/>
    <property type="match status" value="1"/>
</dbReference>
<dbReference type="FunFam" id="3.10.410.10:FF:000001">
    <property type="entry name" value="Putative formate--tetrahydrofolate ligase"/>
    <property type="match status" value="1"/>
</dbReference>
<dbReference type="Gene3D" id="3.30.1510.10">
    <property type="entry name" value="Domain 2, N(10)-formyltetrahydrofolate synthetase"/>
    <property type="match status" value="1"/>
</dbReference>
<dbReference type="Gene3D" id="3.10.410.10">
    <property type="entry name" value="Formyltetrahydrofolate synthetase, domain 3"/>
    <property type="match status" value="1"/>
</dbReference>
<dbReference type="Gene3D" id="3.40.50.300">
    <property type="entry name" value="P-loop containing nucleotide triphosphate hydrolases"/>
    <property type="match status" value="1"/>
</dbReference>
<dbReference type="HAMAP" id="MF_01543">
    <property type="entry name" value="FTHFS"/>
    <property type="match status" value="1"/>
</dbReference>
<dbReference type="InterPro" id="IPR000559">
    <property type="entry name" value="Formate_THF_ligase"/>
</dbReference>
<dbReference type="InterPro" id="IPR020628">
    <property type="entry name" value="Formate_THF_ligase_CS"/>
</dbReference>
<dbReference type="InterPro" id="IPR027417">
    <property type="entry name" value="P-loop_NTPase"/>
</dbReference>
<dbReference type="NCBIfam" id="NF010030">
    <property type="entry name" value="PRK13505.1"/>
    <property type="match status" value="1"/>
</dbReference>
<dbReference type="Pfam" id="PF01268">
    <property type="entry name" value="FTHFS"/>
    <property type="match status" value="1"/>
</dbReference>
<dbReference type="SUPFAM" id="SSF52540">
    <property type="entry name" value="P-loop containing nucleoside triphosphate hydrolases"/>
    <property type="match status" value="1"/>
</dbReference>
<dbReference type="PROSITE" id="PS00721">
    <property type="entry name" value="FTHFS_1"/>
    <property type="match status" value="1"/>
</dbReference>
<dbReference type="PROSITE" id="PS00722">
    <property type="entry name" value="FTHFS_2"/>
    <property type="match status" value="1"/>
</dbReference>
<accession>A6U2J8</accession>
<organism>
    <name type="scientific">Staphylococcus aureus (strain JH1)</name>
    <dbReference type="NCBI Taxonomy" id="359787"/>
    <lineage>
        <taxon>Bacteria</taxon>
        <taxon>Bacillati</taxon>
        <taxon>Bacillota</taxon>
        <taxon>Bacilli</taxon>
        <taxon>Bacillales</taxon>
        <taxon>Staphylococcaceae</taxon>
        <taxon>Staphylococcus</taxon>
    </lineage>
</organism>
<sequence>MTHLSDLDIANQSTLQPIKDIAASVGISEDALEPYGHYKAKIDINKITPRENKGKVVLVTAMSPTPAGEGKSTVTVGLADAFHELNKNVMVALREPALGPTFGIKGGATGGGYAQVLPMEDINLHFNGDFHAITTANNALSAFIDNHIHQGNELGIDQRRIEWKRVLDMNDRALRHVNVGLGGPTNGVPREDGFNITVASEIMAILCLSRSIKDLKDKISRITIGYTRDRKPVTVADLKVQGALAMILKDAIKPNLVQSIEGTPALVHGGPFANIAHGCNSILATETARDLADIVVTEAGFGSDLGAEKFMDIKAREAGFDLAAVVVVATIRALKMHGGVAKDNLKEENVEAVKAGIVNLERHVNNIKKFGVEPVVAINAFIHDTDAEVEYVKSWAKENNVRIALTEVWEKGGKGGVDLANEVLEVIDQPNSFKPLYELELPLEQKIEKIVTEIYGGSKVTFSSKAQKQLKQFKENGWDNYPVCMAKTQYSFSDDQTLLGAPSGFEITIRELEAKTGAGFIVALTGAIMTMPGLPKKPAALNMDVTDDGHAIGLF</sequence>
<evidence type="ECO:0000255" key="1">
    <source>
        <dbReference type="HAMAP-Rule" id="MF_01543"/>
    </source>
</evidence>
<comment type="catalytic activity">
    <reaction evidence="1">
        <text>(6S)-5,6,7,8-tetrahydrofolate + formate + ATP = (6R)-10-formyltetrahydrofolate + ADP + phosphate</text>
        <dbReference type="Rhea" id="RHEA:20221"/>
        <dbReference type="ChEBI" id="CHEBI:15740"/>
        <dbReference type="ChEBI" id="CHEBI:30616"/>
        <dbReference type="ChEBI" id="CHEBI:43474"/>
        <dbReference type="ChEBI" id="CHEBI:57453"/>
        <dbReference type="ChEBI" id="CHEBI:195366"/>
        <dbReference type="ChEBI" id="CHEBI:456216"/>
        <dbReference type="EC" id="6.3.4.3"/>
    </reaction>
</comment>
<comment type="pathway">
    <text evidence="1">One-carbon metabolism; tetrahydrofolate interconversion.</text>
</comment>
<comment type="similarity">
    <text evidence="1">Belongs to the formate--tetrahydrofolate ligase family.</text>
</comment>
<reference key="1">
    <citation type="submission" date="2007-06" db="EMBL/GenBank/DDBJ databases">
        <title>Complete sequence of chromosome of Staphylococcus aureus subsp. aureus JH1.</title>
        <authorList>
            <consortium name="US DOE Joint Genome Institute"/>
            <person name="Copeland A."/>
            <person name="Lucas S."/>
            <person name="Lapidus A."/>
            <person name="Barry K."/>
            <person name="Detter J.C."/>
            <person name="Glavina del Rio T."/>
            <person name="Hammon N."/>
            <person name="Israni S."/>
            <person name="Dalin E."/>
            <person name="Tice H."/>
            <person name="Pitluck S."/>
            <person name="Chain P."/>
            <person name="Malfatti S."/>
            <person name="Shin M."/>
            <person name="Vergez L."/>
            <person name="Schmutz J."/>
            <person name="Larimer F."/>
            <person name="Land M."/>
            <person name="Hauser L."/>
            <person name="Kyrpides N."/>
            <person name="Ivanova N."/>
            <person name="Tomasz A."/>
            <person name="Richardson P."/>
        </authorList>
    </citation>
    <scope>NUCLEOTIDE SEQUENCE [LARGE SCALE GENOMIC DNA]</scope>
    <source>
        <strain>JH1</strain>
    </source>
</reference>
<gene>
    <name evidence="1" type="primary">fhs</name>
    <name type="ordered locus">SaurJH1_1822</name>
</gene>
<proteinExistence type="inferred from homology"/>
<name>FTHS_STAA2</name>